<protein>
    <recommendedName>
        <fullName evidence="1">Ribosomal RNA small subunit methyltransferase J</fullName>
        <ecNumber evidence="1">2.1.1.242</ecNumber>
    </recommendedName>
    <alternativeName>
        <fullName evidence="1">16S rRNA m2G1516 methyltransferase</fullName>
    </alternativeName>
    <alternativeName>
        <fullName evidence="1">rRNA (guanine-N(2)-)-methyltransferase</fullName>
    </alternativeName>
</protein>
<comment type="function">
    <text evidence="1">Specifically methylates the guanosine in position 1516 of 16S rRNA.</text>
</comment>
<comment type="catalytic activity">
    <reaction evidence="1">
        <text>guanosine(1516) in 16S rRNA + S-adenosyl-L-methionine = N(2)-methylguanosine(1516) in 16S rRNA + S-adenosyl-L-homocysteine + H(+)</text>
        <dbReference type="Rhea" id="RHEA:43220"/>
        <dbReference type="Rhea" id="RHEA-COMP:10412"/>
        <dbReference type="Rhea" id="RHEA-COMP:10413"/>
        <dbReference type="ChEBI" id="CHEBI:15378"/>
        <dbReference type="ChEBI" id="CHEBI:57856"/>
        <dbReference type="ChEBI" id="CHEBI:59789"/>
        <dbReference type="ChEBI" id="CHEBI:74269"/>
        <dbReference type="ChEBI" id="CHEBI:74481"/>
        <dbReference type="EC" id="2.1.1.242"/>
    </reaction>
</comment>
<comment type="subcellular location">
    <subcellularLocation>
        <location evidence="1">Cytoplasm</location>
    </subcellularLocation>
</comment>
<comment type="similarity">
    <text evidence="1">Belongs to the methyltransferase superfamily. RsmJ family.</text>
</comment>
<feature type="chain" id="PRO_0000212092" description="Ribosomal RNA small subunit methyltransferase J">
    <location>
        <begin position="1"/>
        <end position="249"/>
    </location>
</feature>
<feature type="binding site" evidence="1">
    <location>
        <begin position="99"/>
        <end position="100"/>
    </location>
    <ligand>
        <name>S-adenosyl-L-methionine</name>
        <dbReference type="ChEBI" id="CHEBI:59789"/>
    </ligand>
</feature>
<feature type="binding site" evidence="1">
    <location>
        <begin position="115"/>
        <end position="116"/>
    </location>
    <ligand>
        <name>S-adenosyl-L-methionine</name>
        <dbReference type="ChEBI" id="CHEBI:59789"/>
    </ligand>
</feature>
<feature type="binding site" evidence="1">
    <location>
        <begin position="151"/>
        <end position="152"/>
    </location>
    <ligand>
        <name>S-adenosyl-L-methionine</name>
        <dbReference type="ChEBI" id="CHEBI:59789"/>
    </ligand>
</feature>
<feature type="binding site" evidence="1">
    <location>
        <position position="169"/>
    </location>
    <ligand>
        <name>S-adenosyl-L-methionine</name>
        <dbReference type="ChEBI" id="CHEBI:59789"/>
    </ligand>
</feature>
<gene>
    <name evidence="1" type="primary">rsmJ</name>
    <name type="ordered locus">SO_4658</name>
</gene>
<evidence type="ECO:0000255" key="1">
    <source>
        <dbReference type="HAMAP-Rule" id="MF_01523"/>
    </source>
</evidence>
<reference key="1">
    <citation type="journal article" date="2002" name="Nat. Biotechnol.">
        <title>Genome sequence of the dissimilatory metal ion-reducing bacterium Shewanella oneidensis.</title>
        <authorList>
            <person name="Heidelberg J.F."/>
            <person name="Paulsen I.T."/>
            <person name="Nelson K.E."/>
            <person name="Gaidos E.J."/>
            <person name="Nelson W.C."/>
            <person name="Read T.D."/>
            <person name="Eisen J.A."/>
            <person name="Seshadri R."/>
            <person name="Ward N.L."/>
            <person name="Methe B.A."/>
            <person name="Clayton R.A."/>
            <person name="Meyer T."/>
            <person name="Tsapin A."/>
            <person name="Scott J."/>
            <person name="Beanan M.J."/>
            <person name="Brinkac L.M."/>
            <person name="Daugherty S.C."/>
            <person name="DeBoy R.T."/>
            <person name="Dodson R.J."/>
            <person name="Durkin A.S."/>
            <person name="Haft D.H."/>
            <person name="Kolonay J.F."/>
            <person name="Madupu R."/>
            <person name="Peterson J.D."/>
            <person name="Umayam L.A."/>
            <person name="White O."/>
            <person name="Wolf A.M."/>
            <person name="Vamathevan J.J."/>
            <person name="Weidman J.F."/>
            <person name="Impraim M."/>
            <person name="Lee K."/>
            <person name="Berry K.J."/>
            <person name="Lee C."/>
            <person name="Mueller J."/>
            <person name="Khouri H.M."/>
            <person name="Gill J."/>
            <person name="Utterback T.R."/>
            <person name="McDonald L.A."/>
            <person name="Feldblyum T.V."/>
            <person name="Smith H.O."/>
            <person name="Venter J.C."/>
            <person name="Nealson K.H."/>
            <person name="Fraser C.M."/>
        </authorList>
    </citation>
    <scope>NUCLEOTIDE SEQUENCE [LARGE SCALE GENOMIC DNA]</scope>
    <source>
        <strain>ATCC 700550 / JCM 31522 / CIP 106686 / LMG 19005 / NCIMB 14063 / MR-1</strain>
    </source>
</reference>
<accession>Q8E8K6</accession>
<organism>
    <name type="scientific">Shewanella oneidensis (strain ATCC 700550 / JCM 31522 / CIP 106686 / LMG 19005 / NCIMB 14063 / MR-1)</name>
    <dbReference type="NCBI Taxonomy" id="211586"/>
    <lineage>
        <taxon>Bacteria</taxon>
        <taxon>Pseudomonadati</taxon>
        <taxon>Pseudomonadota</taxon>
        <taxon>Gammaproteobacteria</taxon>
        <taxon>Alteromonadales</taxon>
        <taxon>Shewanellaceae</taxon>
        <taxon>Shewanella</taxon>
    </lineage>
</organism>
<name>RSMJ_SHEON</name>
<sequence length="249" mass="27509">MPIPVFFNQQYPTLVDICARWQLVYDANATFELRFESDTLSLHNRDEPKLDGIVVDFVTGAVAHRRKFGGGRGQSIAKAVGLKQGVTPKVVDGTAGLGRDAFVLASLGCTVTMVERHPVVAALLEDGLRRAYQDAEIGDWMRERMQLFHGSSLEALAKLEQGVDVVYLDPMYPHRDKSALVKKEMRVFQTLVGADLDADGLLAPAMALASKRVVVKRPDYAEDLAGVKPSMVIETKKNRFDVYVKSAMK</sequence>
<dbReference type="EC" id="2.1.1.242" evidence="1"/>
<dbReference type="EMBL" id="AE014299">
    <property type="protein sequence ID" value="AAN57617.2"/>
    <property type="molecule type" value="Genomic_DNA"/>
</dbReference>
<dbReference type="RefSeq" id="NP_720173.2">
    <property type="nucleotide sequence ID" value="NC_004347.2"/>
</dbReference>
<dbReference type="RefSeq" id="WP_011074252.1">
    <property type="nucleotide sequence ID" value="NC_004347.2"/>
</dbReference>
<dbReference type="SMR" id="Q8E8K6"/>
<dbReference type="STRING" id="211586.SO_4658"/>
<dbReference type="PaxDb" id="211586-SO_4658"/>
<dbReference type="KEGG" id="son:SO_4658"/>
<dbReference type="PATRIC" id="fig|211586.12.peg.4517"/>
<dbReference type="eggNOG" id="COG0742">
    <property type="taxonomic scope" value="Bacteria"/>
</dbReference>
<dbReference type="HOGENOM" id="CLU_076324_0_0_6"/>
<dbReference type="OrthoDB" id="3191794at2"/>
<dbReference type="PhylomeDB" id="Q8E8K6"/>
<dbReference type="BioCyc" id="SONE211586:G1GMP-4306-MONOMER"/>
<dbReference type="Proteomes" id="UP000008186">
    <property type="component" value="Chromosome"/>
</dbReference>
<dbReference type="GO" id="GO:0005737">
    <property type="term" value="C:cytoplasm"/>
    <property type="evidence" value="ECO:0007669"/>
    <property type="project" value="UniProtKB-SubCell"/>
</dbReference>
<dbReference type="GO" id="GO:0036308">
    <property type="term" value="F:16S rRNA (guanine(1516)-N(2))-methyltransferase activity"/>
    <property type="evidence" value="ECO:0000318"/>
    <property type="project" value="GO_Central"/>
</dbReference>
<dbReference type="GO" id="GO:0070475">
    <property type="term" value="P:rRNA base methylation"/>
    <property type="evidence" value="ECO:0000318"/>
    <property type="project" value="GO_Central"/>
</dbReference>
<dbReference type="CDD" id="cd02440">
    <property type="entry name" value="AdoMet_MTases"/>
    <property type="match status" value="1"/>
</dbReference>
<dbReference type="Gene3D" id="3.40.50.150">
    <property type="entry name" value="Vaccinia Virus protein VP39"/>
    <property type="match status" value="1"/>
</dbReference>
<dbReference type="Gene3D" id="3.40.1630.10">
    <property type="entry name" value="YhiQ-like domain"/>
    <property type="match status" value="1"/>
</dbReference>
<dbReference type="HAMAP" id="MF_01523">
    <property type="entry name" value="16SrRNA_methyltr_J"/>
    <property type="match status" value="1"/>
</dbReference>
<dbReference type="InterPro" id="IPR007536">
    <property type="entry name" value="16SrRNA_methylTrfase_J"/>
</dbReference>
<dbReference type="InterPro" id="IPR029063">
    <property type="entry name" value="SAM-dependent_MTases_sf"/>
</dbReference>
<dbReference type="PANTHER" id="PTHR36112">
    <property type="entry name" value="RIBOSOMAL RNA SMALL SUBUNIT METHYLTRANSFERASE J"/>
    <property type="match status" value="1"/>
</dbReference>
<dbReference type="PANTHER" id="PTHR36112:SF1">
    <property type="entry name" value="RIBOSOMAL RNA SMALL SUBUNIT METHYLTRANSFERASE J"/>
    <property type="match status" value="1"/>
</dbReference>
<dbReference type="Pfam" id="PF04445">
    <property type="entry name" value="SAM_MT"/>
    <property type="match status" value="1"/>
</dbReference>
<dbReference type="SUPFAM" id="SSF53335">
    <property type="entry name" value="S-adenosyl-L-methionine-dependent methyltransferases"/>
    <property type="match status" value="1"/>
</dbReference>
<proteinExistence type="inferred from homology"/>
<keyword id="KW-0963">Cytoplasm</keyword>
<keyword id="KW-0489">Methyltransferase</keyword>
<keyword id="KW-1185">Reference proteome</keyword>
<keyword id="KW-0698">rRNA processing</keyword>
<keyword id="KW-0949">S-adenosyl-L-methionine</keyword>
<keyword id="KW-0808">Transferase</keyword>